<proteinExistence type="evidence at protein level"/>
<feature type="chain" id="PRO_0000086253" description="Mitogen-activated protein kinase kinase kinase 7">
    <location>
        <begin position="1"/>
        <end position="579"/>
    </location>
</feature>
<feature type="domain" description="Protein kinase" evidence="3">
    <location>
        <begin position="36"/>
        <end position="291"/>
    </location>
</feature>
<feature type="region of interest" description="Interaction with MAPK8IP1" evidence="10">
    <location>
        <begin position="1"/>
        <end position="300"/>
    </location>
</feature>
<feature type="region of interest" description="Disordered" evidence="5">
    <location>
        <begin position="301"/>
        <end position="338"/>
    </location>
</feature>
<feature type="region of interest" description="Disordered" evidence="5">
    <location>
        <begin position="354"/>
        <end position="391"/>
    </location>
</feature>
<feature type="region of interest" description="Disordered" evidence="5">
    <location>
        <begin position="416"/>
        <end position="466"/>
    </location>
</feature>
<feature type="compositionally biased region" description="Polar residues" evidence="5">
    <location>
        <begin position="306"/>
        <end position="338"/>
    </location>
</feature>
<feature type="compositionally biased region" description="Low complexity" evidence="5">
    <location>
        <begin position="361"/>
        <end position="375"/>
    </location>
</feature>
<feature type="compositionally biased region" description="Polar residues" evidence="5">
    <location>
        <begin position="416"/>
        <end position="425"/>
    </location>
</feature>
<feature type="compositionally biased region" description="Low complexity" evidence="5">
    <location>
        <begin position="426"/>
        <end position="436"/>
    </location>
</feature>
<feature type="active site" description="Proton acceptor" evidence="3 4">
    <location>
        <position position="156"/>
    </location>
</feature>
<feature type="binding site" evidence="3">
    <location>
        <begin position="42"/>
        <end position="50"/>
    </location>
    <ligand>
        <name>ATP</name>
        <dbReference type="ChEBI" id="CHEBI:30616"/>
    </ligand>
</feature>
<feature type="binding site" evidence="3">
    <location>
        <position position="63"/>
    </location>
    <ligand>
        <name>ATP</name>
        <dbReference type="ChEBI" id="CHEBI:30616"/>
    </ligand>
</feature>
<feature type="modified residue" description="Phosphothreonine; by autocatalysis" evidence="2">
    <location>
        <position position="184"/>
    </location>
</feature>
<feature type="modified residue" description="Phosphothreonine; by autocatalysis" evidence="2">
    <location>
        <position position="187"/>
    </location>
</feature>
<feature type="modified residue" description="Phosphoserine; by autocatalysis" evidence="2">
    <location>
        <position position="192"/>
    </location>
</feature>
<feature type="modified residue" description="Phosphoserine" evidence="2">
    <location>
        <position position="367"/>
    </location>
</feature>
<feature type="modified residue" description="Phosphoserine" evidence="25 26">
    <location>
        <position position="389"/>
    </location>
</feature>
<feature type="modified residue" description="Phosphoserine" evidence="24 25 26">
    <location>
        <position position="412"/>
    </location>
</feature>
<feature type="modified residue" description="Phosphoserine" evidence="2">
    <location>
        <position position="428"/>
    </location>
</feature>
<feature type="cross-link" description="Glycyl lysine isopeptide (Lys-Gly) (interchain with G-Cter in ubiquitin)" evidence="2">
    <location>
        <position position="72"/>
    </location>
</feature>
<feature type="cross-link" description="Glycyl lysine isopeptide (Lys-Gly) (interchain with G-Cter in ubiquitin)" evidence="17">
    <location>
        <position position="158"/>
    </location>
</feature>
<feature type="cross-link" description="Glycyl lysine isopeptide (Lys-Gly) (interchain with G-Cter in ubiquitin)" evidence="23">
    <location>
        <position position="209"/>
    </location>
</feature>
<feature type="mutagenesis site" description="No effect on ubiquitination. No effect on induction of phosphorylation; when associated with R-562." evidence="17">
    <original>K</original>
    <variation>R</variation>
    <location>
        <position position="34"/>
    </location>
</feature>
<feature type="mutagenesis site" description="Abolishes ubiquitination. Abolishes ubiquitination and induction of phosphorylation; when associated with R-209." evidence="17">
    <original>K</original>
    <variation>R</variation>
    <location>
        <position position="158"/>
    </location>
</feature>
<feature type="mutagenesis site" description="Strongly decreases ubiquitination. Abolishes ubiquitination and induction of phosphorylation; when associated with R-158." evidence="17">
    <original>K</original>
    <variation>R</variation>
    <location>
        <position position="209"/>
    </location>
</feature>
<feature type="mutagenesis site" description="No effect on ubiquitination. No effect on induction of phosphorylation; when associated with R-34." evidence="17">
    <original>K</original>
    <variation>R</variation>
    <location>
        <position position="562"/>
    </location>
</feature>
<reference key="1">
    <citation type="journal article" date="1995" name="Science">
        <title>Identification of a member of the MAPKKK family as a potential mediator of TGF-beta signal transduction.</title>
        <authorList>
            <person name="Yamaguchi K."/>
            <person name="Shirakabe K."/>
            <person name="Shibuya H."/>
            <person name="Irie K."/>
            <person name="Ohishi I."/>
            <person name="Ueno N."/>
            <person name="Taniguchi T."/>
            <person name="Nishida E."/>
            <person name="Matsumoto K."/>
        </authorList>
    </citation>
    <scope>NUCLEOTIDE SEQUENCE [MRNA]</scope>
    <scope>FUNCTION</scope>
</reference>
<reference key="2">
    <citation type="journal article" date="2000" name="J. Biol. Chem.">
        <title>BMP2-induced apoptosis is mediated by activation of the TAK1-p38 kinase pathway that is negatively regulated by Smad6.</title>
        <authorList>
            <person name="Kimura N."/>
            <person name="Matsuo R."/>
            <person name="Shibuya H."/>
            <person name="Nakashima K."/>
            <person name="Taga T."/>
        </authorList>
    </citation>
    <scope>FUNCTION</scope>
    <scope>INTERACTION WITH SMAD6</scope>
</reference>
<reference key="3">
    <citation type="journal article" date="2003" name="J. Biol. Chem.">
        <title>Regulation of the interleukin-1-induced signaling pathways by a novel member of the protein phosphatase 2C family (PP2Cepsilon).</title>
        <authorList>
            <person name="Li M.G."/>
            <person name="Katsura K."/>
            <person name="Nomiyama H."/>
            <person name="Komaki K."/>
            <person name="Ninomiya-Tsuji J."/>
            <person name="Matsumoto K."/>
            <person name="Kobayashi T."/>
            <person name="Tamura S."/>
        </authorList>
    </citation>
    <scope>INTERACTION WITH PPM1L</scope>
</reference>
<reference key="4">
    <citation type="journal article" date="2005" name="J. Biol. Chem.">
        <title>X-linked inhibitor of apoptosis (XIAP) inhibits c-Jun N-terminal kinase 1 (JNK1) activation by transforming growth factor beta1 (TGF-beta1) through ubiquitin-mediated proteosomal degradation of the TGF-beta1-activated kinase 1 (TAK1).</title>
        <authorList>
            <person name="Kaur S."/>
            <person name="Wang F."/>
            <person name="Venkatraman M."/>
            <person name="Arsura M."/>
        </authorList>
    </citation>
    <scope>FUNCTION</scope>
    <scope>UBIQUITINATION</scope>
    <scope>PROTEASOMAL DEGRADATION</scope>
</reference>
<reference key="5">
    <citation type="journal article" date="2007" name="J. Exp. Med.">
        <title>Deubiquitinating enzyme CYLD negatively regulates the ubiquitin-dependent kinase Tak1 and prevents abnormal T cell responses.</title>
        <authorList>
            <person name="Reiley W.W."/>
            <person name="Jin W."/>
            <person name="Lee A.J."/>
            <person name="Wright A."/>
            <person name="Wu X."/>
            <person name="Tewalt E.F."/>
            <person name="Leonard T.O."/>
            <person name="Norbury C.C."/>
            <person name="Fitzpatrick L."/>
            <person name="Zhang M."/>
            <person name="Sun S.C."/>
        </authorList>
    </citation>
    <scope>UBIQUITINATION</scope>
    <scope>INTERACTION WITH CYLD</scope>
    <scope>DEUBIQUITINATION BY CYLD</scope>
</reference>
<reference key="6">
    <citation type="journal article" date="2007" name="Mol. Cell. Biol.">
        <title>Vaccinia-related kinase 2 modulates the stress response to hypoxia mediated by TAK1.</title>
        <authorList>
            <person name="Blanco S."/>
            <person name="Santos C."/>
            <person name="Lazo P.A."/>
        </authorList>
    </citation>
    <scope>INTERACTION WITH VRK2 AND MAPK8IP1</scope>
</reference>
<reference key="7">
    <citation type="journal article" date="2007" name="Oncogene">
        <title>Ubiquitin-mediated activation of TAK1 and IKK.</title>
        <authorList>
            <person name="Adhikari A."/>
            <person name="Xu M."/>
            <person name="Chen Z.J."/>
        </authorList>
    </citation>
    <scope>REVIEW ON ACTIVITY REGULATION</scope>
</reference>
<reference key="8">
    <citation type="journal article" date="2007" name="Proc. Natl. Acad. Sci. U.S.A.">
        <title>Large-scale phosphorylation analysis of mouse liver.</title>
        <authorList>
            <person name="Villen J."/>
            <person name="Beausoleil S.A."/>
            <person name="Gerber S.A."/>
            <person name="Gygi S.P."/>
        </authorList>
    </citation>
    <scope>PHOSPHORYLATION [LARGE SCALE ANALYSIS] AT SER-412</scope>
    <scope>IDENTIFICATION BY MASS SPECTROMETRY [LARGE SCALE ANALYSIS]</scope>
    <source>
        <tissue>Liver</tissue>
    </source>
</reference>
<reference key="9">
    <citation type="journal article" date="2008" name="J. Biol. Chem.">
        <title>TAK1 is a central mediator of NOD2 signaling in epidermal cells.</title>
        <authorList>
            <person name="Kim J.Y."/>
            <person name="Omori E."/>
            <person name="Matsumoto K."/>
            <person name="Nunez G."/>
            <person name="Ninomiya-Tsuji J."/>
        </authorList>
    </citation>
    <scope>FUNCTION</scope>
</reference>
<reference key="10">
    <citation type="journal article" date="2009" name="Immunity">
        <title>The phagosomal proteome in interferon-gamma-activated macrophages.</title>
        <authorList>
            <person name="Trost M."/>
            <person name="English L."/>
            <person name="Lemieux S."/>
            <person name="Courcelles M."/>
            <person name="Desjardins M."/>
            <person name="Thibault P."/>
        </authorList>
    </citation>
    <scope>PHOSPHORYLATION [LARGE SCALE ANALYSIS] AT SER-389 AND SER-412</scope>
    <scope>IDENTIFICATION BY MASS SPECTROMETRY [LARGE SCALE ANALYSIS]</scope>
</reference>
<reference key="11">
    <citation type="journal article" date="2010" name="Cell">
        <title>A tissue-specific atlas of mouse protein phosphorylation and expression.</title>
        <authorList>
            <person name="Huttlin E.L."/>
            <person name="Jedrychowski M.P."/>
            <person name="Elias J.E."/>
            <person name="Goswami T."/>
            <person name="Rad R."/>
            <person name="Beausoleil S.A."/>
            <person name="Villen J."/>
            <person name="Haas W."/>
            <person name="Sowa M.E."/>
            <person name="Gygi S.P."/>
        </authorList>
    </citation>
    <scope>PHOSPHORYLATION [LARGE SCALE ANALYSIS] AT SER-389 AND SER-412</scope>
    <scope>IDENTIFICATION BY MASS SPECTROMETRY [LARGE SCALE ANALYSIS]</scope>
    <source>
        <tissue>Brain</tissue>
        <tissue>Brown adipose tissue</tissue>
        <tissue>Heart</tissue>
        <tissue>Kidney</tissue>
        <tissue>Liver</tissue>
        <tissue>Lung</tissue>
        <tissue>Pancreas</tissue>
        <tissue>Spleen</tissue>
        <tissue>Testis</tissue>
    </source>
</reference>
<reference key="12">
    <citation type="journal article" date="2010" name="Int. J. Biochem. Cell Biol.">
        <title>The TAK1-TRAF6 signalling pathway.</title>
        <authorList>
            <person name="Landstrom M."/>
        </authorList>
    </citation>
    <scope>REVIEW ON ACTIVITY REGULATION</scope>
    <scope>REVIEW ON FUNCTION</scope>
</reference>
<reference key="13">
    <citation type="journal article" date="2015" name="J. Immunol.">
        <title>Ndfip1 regulates itch ligase activity and airway inflammation via UbcH7.</title>
        <authorList>
            <person name="Kathania M."/>
            <person name="Zeng M."/>
            <person name="Yadav V.N."/>
            <person name="Moghaddam S.J."/>
            <person name="Yang B."/>
            <person name="Venuprasad K."/>
        </authorList>
    </citation>
    <scope>IDENTIFICATION IN COMPLEX WITH NDFIP1 AND ITCH</scope>
    <scope>UBIQUITINATION BY ITCH</scope>
</reference>
<reference key="14">
    <citation type="journal article" date="2016" name="J. Immunol.">
        <title>POSH regulates CD4+ T cell differentiation and survival.</title>
        <authorList>
            <person name="Cunningham C.A."/>
            <person name="Cardwell L.N."/>
            <person name="Guan Y."/>
            <person name="Teixeiro E."/>
            <person name="Daniels M.A."/>
        </authorList>
    </citation>
    <scope>IDENTIFICATION IN A COMPLEX WITH SH3RF1; RAC2; MAP2K7; MAPK8IP1; MAPK8 AND MAPK9</scope>
</reference>
<reference key="15">
    <citation type="journal article" date="2016" name="JCI Insight">
        <title>PLEKHM1/DEF8/RAB7 complex regulates lysosome positioning and bone homeostasis.</title>
        <authorList>
            <person name="Fujiwara T."/>
            <person name="Ye S."/>
            <person name="Castro-Gomes T."/>
            <person name="Winchell C.G."/>
            <person name="Andrews N.W."/>
            <person name="Voth D.E."/>
            <person name="Varughese K.I."/>
            <person name="Mackintosh S.G."/>
            <person name="Feng Y."/>
            <person name="Pavlos N."/>
            <person name="Nakamura T."/>
            <person name="Manolagas S.C."/>
            <person name="Zhao H."/>
        </authorList>
    </citation>
    <scope>INTERACTION WITH PLEKHM1</scope>
</reference>
<reference key="16">
    <citation type="journal article" date="2017" name="Nat. Commun.">
        <title>Regulation of RIPK1 activation by TAK1-mediated phosphorylation dictates apoptosis and necroptosis.</title>
        <authorList>
            <person name="Geng J."/>
            <person name="Ito Y."/>
            <person name="Shi L."/>
            <person name="Amin P."/>
            <person name="Chu J."/>
            <person name="Ouchida A.T."/>
            <person name="Mookhtiar A.K."/>
            <person name="Zhao H."/>
            <person name="Xu D."/>
            <person name="Shan B."/>
            <person name="Najafov A."/>
            <person name="Gao G."/>
            <person name="Akira S."/>
            <person name="Yuan J."/>
        </authorList>
    </citation>
    <scope>FUNCTION</scope>
</reference>
<reference key="17">
    <citation type="journal article" date="2018" name="Nat. Med.">
        <title>The deubiquitinating enzyme cylindromatosis mitigates nonalcoholic steatohepatitis.</title>
        <authorList>
            <person name="Ji Y.X."/>
            <person name="Huang Z."/>
            <person name="Yang X."/>
            <person name="Wang X."/>
            <person name="Zhao L.P."/>
            <person name="Wang P.X."/>
            <person name="Zhang X.J."/>
            <person name="Alves-Bezerra M."/>
            <person name="Cai L."/>
            <person name="Zhang P."/>
            <person name="Lu Y.X."/>
            <person name="Bai L."/>
            <person name="Gao M.M."/>
            <person name="Zhao H."/>
            <person name="Tian S."/>
            <person name="Wang Y."/>
            <person name="Huang Z.X."/>
            <person name="Zhu X.Y."/>
            <person name="Zhang Y."/>
            <person name="Gong J."/>
            <person name="She Z.G."/>
            <person name="Li F."/>
            <person name="Cohen D.E."/>
            <person name="Li H."/>
        </authorList>
    </citation>
    <scope>FUNCTION</scope>
    <scope>UBIQUITINATION AT LYS-158 AND LYS-209</scope>
    <scope>DEUBIQUITINATION BY CYLD</scope>
    <scope>ACTIVITY REGULATION</scope>
    <scope>MUTAGENESIS OF LYS-34; LYS-158; LYS-209 AND LYS-562</scope>
</reference>
<reference key="18">
    <citation type="journal article" date="2019" name="Nat. Commun.">
        <title>K63-linked ubiquitination regulates RIPK1 kinase activity to prevent cell death during embryogenesis and inflammation.</title>
        <authorList>
            <person name="Tang Y."/>
            <person name="Tu H."/>
            <person name="Zhang J."/>
            <person name="Zhao X."/>
            <person name="Wang Y."/>
            <person name="Qin J."/>
            <person name="Lin X."/>
        </authorList>
    </citation>
    <scope>INTERACTION WITH RIPK1</scope>
</reference>
<reference key="19">
    <citation type="journal article" date="2023" name="Mol. Cell">
        <title>TAK1 is an essential kinase for STING trafficking.</title>
        <authorList>
            <person name="Ma M."/>
            <person name="Dang Y."/>
            <person name="Chang B."/>
            <person name="Wang F."/>
            <person name="Xu J."/>
            <person name="Chen L."/>
            <person name="Su H."/>
            <person name="Li J."/>
            <person name="Ge B."/>
            <person name="Chen C."/>
            <person name="Liu H."/>
        </authorList>
    </citation>
    <scope>FUNCTION</scope>
</reference>
<dbReference type="EC" id="2.7.11.25" evidence="2"/>
<dbReference type="EMBL" id="D76446">
    <property type="protein sequence ID" value="BAA11184.1"/>
    <property type="molecule type" value="mRNA"/>
</dbReference>
<dbReference type="CCDS" id="CCDS18014.1"/>
<dbReference type="RefSeq" id="NP_766276.1">
    <property type="nucleotide sequence ID" value="NM_172688.3"/>
</dbReference>
<dbReference type="SMR" id="Q62073"/>
<dbReference type="BioGRID" id="204962">
    <property type="interactions" value="54"/>
</dbReference>
<dbReference type="CORUM" id="Q62073"/>
<dbReference type="DIP" id="DIP-40666N"/>
<dbReference type="FunCoup" id="Q62073">
    <property type="interactions" value="3968"/>
</dbReference>
<dbReference type="IntAct" id="Q62073">
    <property type="interactions" value="21"/>
</dbReference>
<dbReference type="MINT" id="Q62073"/>
<dbReference type="STRING" id="10090.ENSMUSP00000040307"/>
<dbReference type="ChEMBL" id="CHEMBL5465319"/>
<dbReference type="GlyGen" id="Q62073">
    <property type="glycosylation" value="7 sites, 2 N-linked glycans (2 sites), 1 O-linked glycan (4 sites)"/>
</dbReference>
<dbReference type="iPTMnet" id="Q62073"/>
<dbReference type="PhosphoSitePlus" id="Q62073"/>
<dbReference type="jPOST" id="Q62073"/>
<dbReference type="PaxDb" id="10090-ENSMUSP00000040307"/>
<dbReference type="ProteomicsDB" id="292068"/>
<dbReference type="Pumba" id="Q62073"/>
<dbReference type="Antibodypedia" id="2078">
    <property type="antibodies" value="1194 antibodies from 45 providers"/>
</dbReference>
<dbReference type="DNASU" id="26409"/>
<dbReference type="Ensembl" id="ENSMUST00000080933.13">
    <property type="protein sequence ID" value="ENSMUSP00000079734.7"/>
    <property type="gene ID" value="ENSMUSG00000028284.14"/>
</dbReference>
<dbReference type="GeneID" id="26409"/>
<dbReference type="KEGG" id="mmu:26409"/>
<dbReference type="UCSC" id="uc008sep.2">
    <property type="organism name" value="mouse"/>
</dbReference>
<dbReference type="AGR" id="MGI:1346877"/>
<dbReference type="CTD" id="6885"/>
<dbReference type="MGI" id="MGI:1346877">
    <property type="gene designation" value="Map3k7"/>
</dbReference>
<dbReference type="VEuPathDB" id="HostDB:ENSMUSG00000028284"/>
<dbReference type="eggNOG" id="KOG0192">
    <property type="taxonomic scope" value="Eukaryota"/>
</dbReference>
<dbReference type="GeneTree" id="ENSGT00940000157785"/>
<dbReference type="HOGENOM" id="CLU_000288_7_41_1"/>
<dbReference type="InParanoid" id="Q62073"/>
<dbReference type="OMA" id="ARTQCFA"/>
<dbReference type="OrthoDB" id="10261027at2759"/>
<dbReference type="BRENDA" id="2.7.11.25">
    <property type="organism ID" value="3474"/>
</dbReference>
<dbReference type="Reactome" id="R-MMU-168638">
    <property type="pathway name" value="NOD1/2 Signaling Pathway"/>
</dbReference>
<dbReference type="Reactome" id="R-MMU-202424">
    <property type="pathway name" value="Downstream TCR signaling"/>
</dbReference>
<dbReference type="Reactome" id="R-MMU-2871837">
    <property type="pathway name" value="FCERI mediated NF-kB activation"/>
</dbReference>
<dbReference type="Reactome" id="R-MMU-4086398">
    <property type="pathway name" value="Ca2+ pathway"/>
</dbReference>
<dbReference type="Reactome" id="R-MMU-445989">
    <property type="pathway name" value="TAK1-dependent IKK and NF-kappa-B activation"/>
</dbReference>
<dbReference type="Reactome" id="R-MMU-450302">
    <property type="pathway name" value="activated TAK1 mediates p38 MAPK activation"/>
</dbReference>
<dbReference type="Reactome" id="R-MMU-450321">
    <property type="pathway name" value="JNK (c-Jun kinases) phosphorylation and activation mediated by activated human TAK1"/>
</dbReference>
<dbReference type="Reactome" id="R-MMU-5357956">
    <property type="pathway name" value="TNFR1-induced NF-kappa-B signaling pathway"/>
</dbReference>
<dbReference type="Reactome" id="R-MMU-5607764">
    <property type="pathway name" value="CLEC7A (Dectin-1) signaling"/>
</dbReference>
<dbReference type="Reactome" id="R-MMU-5689880">
    <property type="pathway name" value="Ub-specific processing proteases"/>
</dbReference>
<dbReference type="Reactome" id="R-MMU-9020702">
    <property type="pathway name" value="Interleukin-1 signaling"/>
</dbReference>
<dbReference type="Reactome" id="R-MMU-937042">
    <property type="pathway name" value="IRAK2 mediated activation of TAK1 complex"/>
</dbReference>
<dbReference type="Reactome" id="R-MMU-937072">
    <property type="pathway name" value="TRAF6-mediated induction of TAK1 complex within TLR4 complex"/>
</dbReference>
<dbReference type="Reactome" id="R-MMU-9645460">
    <property type="pathway name" value="Alpha-protein kinase 1 signaling pathway"/>
</dbReference>
<dbReference type="Reactome" id="R-MMU-975163">
    <property type="pathway name" value="IRAK2 mediated activation of TAK1 complex upon TLR7/8 or 9 stimulation"/>
</dbReference>
<dbReference type="BioGRID-ORCS" id="26409">
    <property type="hits" value="26 hits in 83 CRISPR screens"/>
</dbReference>
<dbReference type="ChiTaRS" id="Map3k7">
    <property type="organism name" value="mouse"/>
</dbReference>
<dbReference type="PRO" id="PR:Q62073"/>
<dbReference type="Proteomes" id="UP000000589">
    <property type="component" value="Chromosome 4"/>
</dbReference>
<dbReference type="RNAct" id="Q62073">
    <property type="molecule type" value="protein"/>
</dbReference>
<dbReference type="Bgee" id="ENSMUSG00000028284">
    <property type="expression patterns" value="Expressed in undifferentiated genital tubercle and 266 other cell types or tissues"/>
</dbReference>
<dbReference type="ExpressionAtlas" id="Q62073">
    <property type="expression patterns" value="baseline and differential"/>
</dbReference>
<dbReference type="GO" id="GO:0005829">
    <property type="term" value="C:cytosol"/>
    <property type="evidence" value="ECO:0000304"/>
    <property type="project" value="Reactome"/>
</dbReference>
<dbReference type="GO" id="GO:0005886">
    <property type="term" value="C:plasma membrane"/>
    <property type="evidence" value="ECO:0007669"/>
    <property type="project" value="UniProtKB-SubCell"/>
</dbReference>
<dbReference type="GO" id="GO:0014069">
    <property type="term" value="C:postsynaptic density"/>
    <property type="evidence" value="ECO:0000314"/>
    <property type="project" value="MGI"/>
</dbReference>
<dbReference type="GO" id="GO:0005524">
    <property type="term" value="F:ATP binding"/>
    <property type="evidence" value="ECO:0007669"/>
    <property type="project" value="UniProtKB-KW"/>
</dbReference>
<dbReference type="GO" id="GO:0000287">
    <property type="term" value="F:magnesium ion binding"/>
    <property type="evidence" value="ECO:0007669"/>
    <property type="project" value="InterPro"/>
</dbReference>
<dbReference type="GO" id="GO:0004708">
    <property type="term" value="F:MAP kinase kinase activity"/>
    <property type="evidence" value="ECO:0000314"/>
    <property type="project" value="MGI"/>
</dbReference>
<dbReference type="GO" id="GO:0004709">
    <property type="term" value="F:MAP kinase kinase kinase activity"/>
    <property type="evidence" value="ECO:0000250"/>
    <property type="project" value="UniProtKB"/>
</dbReference>
<dbReference type="GO" id="GO:0008349">
    <property type="term" value="F:MAP kinase kinase kinase kinase activity"/>
    <property type="evidence" value="ECO:0000315"/>
    <property type="project" value="MGI"/>
</dbReference>
<dbReference type="GO" id="GO:0106310">
    <property type="term" value="F:protein serine kinase activity"/>
    <property type="evidence" value="ECO:0007669"/>
    <property type="project" value="RHEA"/>
</dbReference>
<dbReference type="GO" id="GO:0004674">
    <property type="term" value="F:protein serine/threonine kinase activity"/>
    <property type="evidence" value="ECO:0000314"/>
    <property type="project" value="WormBase"/>
</dbReference>
<dbReference type="GO" id="GO:0030971">
    <property type="term" value="F:receptor tyrosine kinase binding"/>
    <property type="evidence" value="ECO:0000353"/>
    <property type="project" value="WormBase"/>
</dbReference>
<dbReference type="GO" id="GO:0097110">
    <property type="term" value="F:scaffold protein binding"/>
    <property type="evidence" value="ECO:0000266"/>
    <property type="project" value="MGI"/>
</dbReference>
<dbReference type="GO" id="GO:0001525">
    <property type="term" value="P:angiogenesis"/>
    <property type="evidence" value="ECO:0000315"/>
    <property type="project" value="MGI"/>
</dbReference>
<dbReference type="GO" id="GO:0043276">
    <property type="term" value="P:anoikis"/>
    <property type="evidence" value="ECO:0000315"/>
    <property type="project" value="ParkinsonsUK-UCL"/>
</dbReference>
<dbReference type="GO" id="GO:0097190">
    <property type="term" value="P:apoptotic signaling pathway"/>
    <property type="evidence" value="ECO:0000315"/>
    <property type="project" value="MGI"/>
</dbReference>
<dbReference type="GO" id="GO:0060348">
    <property type="term" value="P:bone development"/>
    <property type="evidence" value="ECO:0000315"/>
    <property type="project" value="MGI"/>
</dbReference>
<dbReference type="GO" id="GO:0007252">
    <property type="term" value="P:I-kappaB phosphorylation"/>
    <property type="evidence" value="ECO:0000250"/>
    <property type="project" value="UniProtKB"/>
</dbReference>
<dbReference type="GO" id="GO:0007254">
    <property type="term" value="P:JNK cascade"/>
    <property type="evidence" value="ECO:0000314"/>
    <property type="project" value="UniProtKB"/>
</dbReference>
<dbReference type="GO" id="GO:0000165">
    <property type="term" value="P:MAPK cascade"/>
    <property type="evidence" value="ECO:0000314"/>
    <property type="project" value="MGI"/>
</dbReference>
<dbReference type="GO" id="GO:2001234">
    <property type="term" value="P:negative regulation of apoptotic signaling pathway"/>
    <property type="evidence" value="ECO:0000315"/>
    <property type="project" value="MGI"/>
</dbReference>
<dbReference type="GO" id="GO:0060546">
    <property type="term" value="P:negative regulation of necroptotic process"/>
    <property type="evidence" value="ECO:0000315"/>
    <property type="project" value="UniProtKB"/>
</dbReference>
<dbReference type="GO" id="GO:2000378">
    <property type="term" value="P:negative regulation of reactive oxygen species metabolic process"/>
    <property type="evidence" value="ECO:0000315"/>
    <property type="project" value="UniProtKB"/>
</dbReference>
<dbReference type="GO" id="GO:1902443">
    <property type="term" value="P:negative regulation of ripoptosome assembly involved in necroptotic process"/>
    <property type="evidence" value="ECO:0000316"/>
    <property type="project" value="MGI"/>
</dbReference>
<dbReference type="GO" id="GO:0001841">
    <property type="term" value="P:neural tube formation"/>
    <property type="evidence" value="ECO:0000315"/>
    <property type="project" value="MGI"/>
</dbReference>
<dbReference type="GO" id="GO:0001649">
    <property type="term" value="P:osteoblast differentiation"/>
    <property type="evidence" value="ECO:0000315"/>
    <property type="project" value="MGI"/>
</dbReference>
<dbReference type="GO" id="GO:0043123">
    <property type="term" value="P:positive regulation of canonical NF-kappaB signal transduction"/>
    <property type="evidence" value="ECO:0000316"/>
    <property type="project" value="MGI"/>
</dbReference>
<dbReference type="GO" id="GO:0046330">
    <property type="term" value="P:positive regulation of JNK cascade"/>
    <property type="evidence" value="ECO:0000316"/>
    <property type="project" value="MGI"/>
</dbReference>
<dbReference type="GO" id="GO:0043507">
    <property type="term" value="P:positive regulation of JUN kinase activity"/>
    <property type="evidence" value="ECO:0000250"/>
    <property type="project" value="UniProtKB"/>
</dbReference>
<dbReference type="GO" id="GO:0016239">
    <property type="term" value="P:positive regulation of macroautophagy"/>
    <property type="evidence" value="ECO:0000315"/>
    <property type="project" value="ParkinsonsUK-UCL"/>
</dbReference>
<dbReference type="GO" id="GO:0006468">
    <property type="term" value="P:protein phosphorylation"/>
    <property type="evidence" value="ECO:0000314"/>
    <property type="project" value="UniProtKB"/>
</dbReference>
<dbReference type="GO" id="GO:2000377">
    <property type="term" value="P:regulation of reactive oxygen species metabolic process"/>
    <property type="evidence" value="ECO:0000315"/>
    <property type="project" value="MGI"/>
</dbReference>
<dbReference type="GO" id="GO:0007179">
    <property type="term" value="P:transforming growth factor beta receptor signaling pathway"/>
    <property type="evidence" value="ECO:0000315"/>
    <property type="project" value="MGI"/>
</dbReference>
<dbReference type="CDD" id="cd14058">
    <property type="entry name" value="STKc_TAK1"/>
    <property type="match status" value="1"/>
</dbReference>
<dbReference type="FunFam" id="1.10.510.10:FF:000143">
    <property type="entry name" value="Mitogen-activated protein kinase kinase kinase 7"/>
    <property type="match status" value="1"/>
</dbReference>
<dbReference type="FunFam" id="3.30.200.20:FF:000152">
    <property type="entry name" value="Mitogen-activated protein kinase kinase kinase 7"/>
    <property type="match status" value="1"/>
</dbReference>
<dbReference type="Gene3D" id="3.30.200.20">
    <property type="entry name" value="Phosphorylase Kinase, domain 1"/>
    <property type="match status" value="1"/>
</dbReference>
<dbReference type="Gene3D" id="1.10.510.10">
    <property type="entry name" value="Transferase(Phosphotransferase) domain 1"/>
    <property type="match status" value="1"/>
</dbReference>
<dbReference type="InterPro" id="IPR011009">
    <property type="entry name" value="Kinase-like_dom_sf"/>
</dbReference>
<dbReference type="InterPro" id="IPR049637">
    <property type="entry name" value="MAP3K7"/>
</dbReference>
<dbReference type="InterPro" id="IPR000719">
    <property type="entry name" value="Prot_kinase_dom"/>
</dbReference>
<dbReference type="InterPro" id="IPR017441">
    <property type="entry name" value="Protein_kinase_ATP_BS"/>
</dbReference>
<dbReference type="InterPro" id="IPR001245">
    <property type="entry name" value="Ser-Thr/Tyr_kinase_cat_dom"/>
</dbReference>
<dbReference type="InterPro" id="IPR008271">
    <property type="entry name" value="Ser/Thr_kinase_AS"/>
</dbReference>
<dbReference type="PANTHER" id="PTHR46716">
    <property type="entry name" value="MITOGEN-ACTIVATED PROTEIN KINASE KINASE KINASE 7"/>
    <property type="match status" value="1"/>
</dbReference>
<dbReference type="PANTHER" id="PTHR46716:SF1">
    <property type="entry name" value="MITOGEN-ACTIVATED PROTEIN KINASE KINASE KINASE 7"/>
    <property type="match status" value="1"/>
</dbReference>
<dbReference type="Pfam" id="PF07714">
    <property type="entry name" value="PK_Tyr_Ser-Thr"/>
    <property type="match status" value="1"/>
</dbReference>
<dbReference type="PIRSF" id="PIRSF038168">
    <property type="entry name" value="MAPKKK7"/>
    <property type="match status" value="1"/>
</dbReference>
<dbReference type="PRINTS" id="PR00109">
    <property type="entry name" value="TYRKINASE"/>
</dbReference>
<dbReference type="SMART" id="SM00220">
    <property type="entry name" value="S_TKc"/>
    <property type="match status" value="1"/>
</dbReference>
<dbReference type="SUPFAM" id="SSF56112">
    <property type="entry name" value="Protein kinase-like (PK-like)"/>
    <property type="match status" value="1"/>
</dbReference>
<dbReference type="PROSITE" id="PS00107">
    <property type="entry name" value="PROTEIN_KINASE_ATP"/>
    <property type="match status" value="1"/>
</dbReference>
<dbReference type="PROSITE" id="PS50011">
    <property type="entry name" value="PROTEIN_KINASE_DOM"/>
    <property type="match status" value="1"/>
</dbReference>
<dbReference type="PROSITE" id="PS00108">
    <property type="entry name" value="PROTEIN_KINASE_ST"/>
    <property type="match status" value="1"/>
</dbReference>
<protein>
    <recommendedName>
        <fullName>Mitogen-activated protein kinase kinase kinase 7</fullName>
        <ecNumber evidence="2">2.7.11.25</ecNumber>
    </recommendedName>
    <alternativeName>
        <fullName>Transforming growth factor-beta-activated kinase 1</fullName>
        <shortName>TGF-beta-activated kinase 1</shortName>
    </alternativeName>
</protein>
<keyword id="KW-0053">Apoptosis</keyword>
<keyword id="KW-0067">ATP-binding</keyword>
<keyword id="KW-1003">Cell membrane</keyword>
<keyword id="KW-0963">Cytoplasm</keyword>
<keyword id="KW-1017">Isopeptide bond</keyword>
<keyword id="KW-0418">Kinase</keyword>
<keyword id="KW-0460">Magnesium</keyword>
<keyword id="KW-0472">Membrane</keyword>
<keyword id="KW-0479">Metal-binding</keyword>
<keyword id="KW-0547">Nucleotide-binding</keyword>
<keyword id="KW-0597">Phosphoprotein</keyword>
<keyword id="KW-1185">Reference proteome</keyword>
<keyword id="KW-0723">Serine/threonine-protein kinase</keyword>
<keyword id="KW-0346">Stress response</keyword>
<keyword id="KW-0804">Transcription</keyword>
<keyword id="KW-0805">Transcription regulation</keyword>
<keyword id="KW-0808">Transferase</keyword>
<keyword id="KW-0832">Ubl conjugation</keyword>
<comment type="function">
    <text evidence="2 6 8 11 12 16 17 19 20">Serine/threonine kinase which acts as an essential component of the MAP kinase signal transduction pathway (PubMed:10748100, PubMed:16157589, PubMed:21183079, PubMed:29291351). Plays an important role in the cascades of cellular responses evoked by changes in the environment (PubMed:10748100, PubMed:16157589, PubMed:21183079, PubMed:29291351). Mediates signal transduction of TRAF6, various cytokines including interleukin-1 (IL-1), transforming growth factor-beta (TGFB), TGFB-related factors like BMP2 and BMP4, toll-like receptors (TLR), tumor necrosis factor receptor CD40 and B-cell receptor (BCR) (PubMed:10748100, PubMed:16157589, PubMed:21183079, PubMed:29291351, PubMed:8533096). Once activated, acts as an upstream activator of the MKK/JNK signal transduction cascade and the p38 MAPK signal transduction cascade through the phosphorylation and activation of several MAP kinase kinases like MAP2K1/MEK1, MAP2K3/MKK3, MAP2K6/MKK6 and MAP2K7/MKK7 (By similarity). These MAP2Ks in turn activate p38 MAPKs and c-jun N-terminal kinases (JNKs); both p38 MAPK and JNK pathways control the transcription factors activator protein-1 (AP-1) (By similarity). Independently of MAP2Ks and p38 MAPKs, acts as a key activator of NF-kappa-B by promoting activation of the I-kappa-B-kinase (IKK) core complex (PubMed:17965022). Mechanistically, recruited to polyubiquitin chains of RIPK2 and IKBKG/NEMO via TAB2/MAP3K7IP2 and TAB3/MAP3K7IP3, and catalyzes phosphorylation and activation of IKBKB/IKKB component of the IKK complex, leading to NF-kappa-B activation (By similarity). In osmotic stress signaling, plays a major role in the activation of MAPK8/JNK1, but not that of NF-kappa-B (By similarity). Promotes TRIM5 capsid-specific restriction activity (By similarity). Phosphorylates RIPK1 at 'Ser-321' which positively regulates RIPK1 interaction with RIPK3 to promote necroptosis but negatively regulates RIPK1 kinase activity and its interaction with FADD to mediate apoptosis (PubMed:28842570). Phosphorylates STING1 in response to cGAMP-activation, promoting association between STEEP1 and STING1 and STING1 translocation to COPII vesicles (PubMed:37832545).</text>
</comment>
<comment type="catalytic activity">
    <reaction evidence="2">
        <text>L-seryl-[protein] + ATP = O-phospho-L-seryl-[protein] + ADP + H(+)</text>
        <dbReference type="Rhea" id="RHEA:17989"/>
        <dbReference type="Rhea" id="RHEA-COMP:9863"/>
        <dbReference type="Rhea" id="RHEA-COMP:11604"/>
        <dbReference type="ChEBI" id="CHEBI:15378"/>
        <dbReference type="ChEBI" id="CHEBI:29999"/>
        <dbReference type="ChEBI" id="CHEBI:30616"/>
        <dbReference type="ChEBI" id="CHEBI:83421"/>
        <dbReference type="ChEBI" id="CHEBI:456216"/>
        <dbReference type="EC" id="2.7.11.25"/>
    </reaction>
</comment>
<comment type="catalytic activity">
    <reaction evidence="2">
        <text>L-threonyl-[protein] + ATP = O-phospho-L-threonyl-[protein] + ADP + H(+)</text>
        <dbReference type="Rhea" id="RHEA:46608"/>
        <dbReference type="Rhea" id="RHEA-COMP:11060"/>
        <dbReference type="Rhea" id="RHEA-COMP:11605"/>
        <dbReference type="ChEBI" id="CHEBI:15378"/>
        <dbReference type="ChEBI" id="CHEBI:30013"/>
        <dbReference type="ChEBI" id="CHEBI:30616"/>
        <dbReference type="ChEBI" id="CHEBI:61977"/>
        <dbReference type="ChEBI" id="CHEBI:456216"/>
        <dbReference type="EC" id="2.7.11.25"/>
    </reaction>
</comment>
<comment type="cofactor">
    <cofactor evidence="2">
        <name>Mg(2+)</name>
        <dbReference type="ChEBI" id="CHEBI:18420"/>
    </cofactor>
</comment>
<comment type="activity regulation">
    <text evidence="2 17 21">Activated by pro-inflammatory cytokines and in response to physical and chemical stresses, including osmotic stress, oxidative stress, arsenic and ultraviolet light irradiation (PubMed:20060931). Activated by 'Lys-63'-linked polyubiquitination and by autophosphorylation (PubMed:29291351). Association with TAB1/MAP3K7IP1 and TAB2/MAP3K7IP2 promotes activation through autophosphorylation, whereas PPM1B/PP2CB, PP2A and PPP6C dephosphorylation leads to inactivation (By similarity). Ceramides are also able to activate MAP3K7/TAK1 (By similarity).</text>
</comment>
<comment type="subunit">
    <text evidence="2 6 7 9 10 13 14 15 18">Can form homodimer (By similarity). Binds both upstream activators and downstream substrates in multimolecular complexes (By similarity). Interacts with TAB1/MAP3K7IP1, TAB2/MAP3K7IP2 and TAB3/MAP3K7IP3 (By similarity). Identified in the TRIKA2 complex composed of MAP3K7/TAK1, TAB1/MAP3K7IP1 and TAB2/MAP3K7IP2 (By similarity). Interacts with PPM1L and PPM1B/PP2CB (PubMed:12556533). Interaction with PP2A and PPP6C leads to its repressed activity (By similarity). Interacts with TRAF6 and TAB1/MAP3K7IP1; during IL-1 signaling (By similarity). Interacts with TAOK1 and TAOK2; interaction with TAOK2 interferes with MAP3K7 interaction with IKKA, thus preventing NF-kappa-B activation (By similarity). Interacts with DYNC2I2 (via WD domains) (By similarity). Interacts with CYLD and RBCK1 (PubMed:17548520). Interacts with TGFBR1; induces MAP3K7/TAK1 activation by TRAF6 (By similarity). Interacts with MAPK8IP1 and SMAD6 (PubMed:10748100, PubMed:17709393). Interacts with isoform 1 of VRK2 (PubMed:17709393). Interacts with DAB2; the interaction is induced by TGF-beta stimulation and may mediate TGF-beta stimulated JNK activation (By similarity). Interacts with TRIM5 (By similarity). Part of a complex containing ITCH, NDFIP1 and MAP3K7 (PubMed:25632008). Interacts with PLEKHM1 (via N- and C-terminus) (PubMed:27777970). Interacts with TRIM8 (By similarity). Found in a complex with SH3RF1, RAC2, MAP2K7/MKK7, MAPK8IP1/JIP1, MAPK8/JNK1 and MAPK9/JNK2 (PubMed:27084103). Interacts with SASH1 (By similarity). Interacts with RIPK1 (PubMed:31519887).</text>
</comment>
<comment type="interaction">
    <interactant intactId="EBI-1775345">
        <id>Q62073</id>
    </interactant>
    <interactant intactId="EBI-288464">
        <id>Q9WVI9-2</id>
        <label>Mapk8ip1</label>
    </interactant>
    <organismsDiffer>false</organismsDiffer>
    <experiments>4</experiments>
</comment>
<comment type="interaction">
    <interactant intactId="EBI-1775345">
        <id>Q62073</id>
    </interactant>
    <interactant intactId="EBI-6992047">
        <id>P70340</id>
        <label>Smad1</label>
    </interactant>
    <organismsDiffer>false</organismsDiffer>
    <experiments>3</experiments>
</comment>
<comment type="interaction">
    <interactant intactId="EBI-1775345">
        <id>Q62073</id>
    </interactant>
    <interactant intactId="EBI-1778503">
        <id>Q8CF89</id>
        <label>Tab1</label>
    </interactant>
    <organismsDiffer>false</organismsDiffer>
    <experiments>2</experiments>
</comment>
<comment type="interaction">
    <interactant intactId="EBI-1775345">
        <id>Q62073</id>
    </interactant>
    <interactant intactId="EBI-1775124">
        <id>Q99K90</id>
        <label>Tab2</label>
    </interactant>
    <organismsDiffer>false</organismsDiffer>
    <experiments>8</experiments>
</comment>
<comment type="interaction">
    <interactant intactId="EBI-1775345">
        <id>Q62073</id>
    </interactant>
    <interactant intactId="EBI-520016">
        <id>P39429</id>
        <label>Traf2</label>
    </interactant>
    <organismsDiffer>false</organismsDiffer>
    <experiments>2</experiments>
</comment>
<comment type="interaction">
    <interactant intactId="EBI-1775345">
        <id>Q62073</id>
    </interactant>
    <interactant intactId="EBI-358708">
        <id>Q9NYJ8</id>
        <label>TAB2</label>
    </interactant>
    <organismsDiffer>true</organismsDiffer>
    <experiments>2</experiments>
</comment>
<comment type="interaction">
    <interactant intactId="EBI-1775345">
        <id>Q62073</id>
    </interactant>
    <interactant intactId="EBI-359964">
        <id>Q8N5C8</id>
        <label>TAB3</label>
    </interactant>
    <organismsDiffer>true</organismsDiffer>
    <experiments>2</experiments>
</comment>
<comment type="interaction">
    <interactant intactId="EBI-1775345">
        <id>Q62073</id>
    </interactant>
    <interactant intactId="EBI-1207633">
        <id>Q86Y07-1</id>
        <label>VRK2</label>
    </interactant>
    <organismsDiffer>true</organismsDiffer>
    <experiments>3</experiments>
</comment>
<comment type="subcellular location">
    <subcellularLocation>
        <location evidence="1">Cytoplasm</location>
    </subcellularLocation>
    <subcellularLocation>
        <location evidence="1">Cell membrane</location>
        <topology evidence="1">Peripheral membrane protein</topology>
        <orientation evidence="1">Cytoplasmic side</orientation>
    </subcellularLocation>
    <text evidence="1">Although the majority of MAP3K7/TAK1 is found in the cytosol, when complexed with TAB1/MAP3K7IP1 and TAB2/MAP3K7IP2, it is also localized at the cell membrane.</text>
</comment>
<comment type="PTM">
    <text evidence="1">Association with TAB1/MAP3K7IP1 promotes autophosphorylation and subsequent activation. Association with TAB2/MAP3K7IP2, itself associated with free unanchored Lys-63 polyubiquitin chain, promotes autophosphorylation and subsequent activation of MAP3K7. Dephosphorylation at Thr-187 by PP2A and PPP6C leads to inactivation (By similarity).</text>
</comment>
<comment type="PTM">
    <text evidence="2 8 9 13 17">'Lys-48'-linked polyubiquitination at Lys-72 is induced by TNFalpha, and leads to proteasomal degradation (PubMed:16157589). Undergoes 'Lys-48'-linked polyubiquitination catalyzed by ITCH (PubMed:25632008). 'Lys-63'-linked polyubiquitination at Lys-158 by TRIM8 does not lead to proteasomal degradation but contributes to autophosphorylation and activation. Deubiquitinated by CYLD, a protease that selectively cleaves 'Lys-63'-linked ubiquitin chains (PubMed:17548520, PubMed:29291351).Deubiquitinated by USP19; leading to negative regulation of TNF-alpha- and IL-1beta-triggered NF-kappa-B activation (By similarity).</text>
</comment>
<comment type="similarity">
    <text evidence="22">Belongs to the protein kinase superfamily. STE Ser/Thr protein kinase family. MAP kinase kinase kinase subfamily.</text>
</comment>
<gene>
    <name type="primary">Map3k7</name>
    <name type="synonym">Tak1</name>
</gene>
<name>M3K7_MOUSE</name>
<organism>
    <name type="scientific">Mus musculus</name>
    <name type="common">Mouse</name>
    <dbReference type="NCBI Taxonomy" id="10090"/>
    <lineage>
        <taxon>Eukaryota</taxon>
        <taxon>Metazoa</taxon>
        <taxon>Chordata</taxon>
        <taxon>Craniata</taxon>
        <taxon>Vertebrata</taxon>
        <taxon>Euteleostomi</taxon>
        <taxon>Mammalia</taxon>
        <taxon>Eutheria</taxon>
        <taxon>Euarchontoglires</taxon>
        <taxon>Glires</taxon>
        <taxon>Rodentia</taxon>
        <taxon>Myomorpha</taxon>
        <taxon>Muroidea</taxon>
        <taxon>Muridae</taxon>
        <taxon>Murinae</taxon>
        <taxon>Mus</taxon>
        <taxon>Mus</taxon>
    </lineage>
</organism>
<sequence length="579" mass="64228">MSTASAASSSSSSSASEMIEAPSQVLNFEEIDYKEIEVEEVVGRGAFGVVCKAKWRAKDVAIKQIESESERKAFIVELRQLSRVNHPNIVKLYGACLNPVCLVMEYAEGGSLYNVLHGAEPLPYYTAAHAMSWCLQCSQGVAYLHSMQPKALIHRDLKPPNLLLVAGGTVLKICDFGTACDIQTHMTNNKGSAAWMAPEVFEGSNYSEKCDVFSWGIILWEVITRRKPFDEIGGPAFRIMWAVHNGTRPPLIKNLPKPIESLMTRCWSKDPSQRPSMEEIVKIMTHLMRYFPGADEPLQYPCQYSDEGQSNSATSTGSFMDIASTNTSNKSDTNMEQVPATNDTIKRLESKLLKNQAKQQSESGRLSLGASRGSSVESLPPTSEGKRMSADMSEIEARIVATAGNGQPRRRSIQDLTVTGTEPGQVSSRSSSPSVRMITTSGPTSEKPARSHPWTPDDSTDTNGSDNSIPMAYLTLDHQLQPLAPCPNSKESMAVFEQHCKMAQEYMKVQTEIALLLQRKQELVAELDQDEKDQQNTSRLVQEHKKLLDENKSLSTYYQQCKKQLEVIRSQQQKRQGTS</sequence>
<evidence type="ECO:0000250" key="1"/>
<evidence type="ECO:0000250" key="2">
    <source>
        <dbReference type="UniProtKB" id="O43318"/>
    </source>
</evidence>
<evidence type="ECO:0000255" key="3">
    <source>
        <dbReference type="PROSITE-ProRule" id="PRU00159"/>
    </source>
</evidence>
<evidence type="ECO:0000255" key="4">
    <source>
        <dbReference type="PROSITE-ProRule" id="PRU10027"/>
    </source>
</evidence>
<evidence type="ECO:0000256" key="5">
    <source>
        <dbReference type="SAM" id="MobiDB-lite"/>
    </source>
</evidence>
<evidence type="ECO:0000269" key="6">
    <source>
    </source>
</evidence>
<evidence type="ECO:0000269" key="7">
    <source>
    </source>
</evidence>
<evidence type="ECO:0000269" key="8">
    <source>
    </source>
</evidence>
<evidence type="ECO:0000269" key="9">
    <source>
    </source>
</evidence>
<evidence type="ECO:0000269" key="10">
    <source>
    </source>
</evidence>
<evidence type="ECO:0000269" key="11">
    <source>
    </source>
</evidence>
<evidence type="ECO:0000269" key="12">
    <source>
    </source>
</evidence>
<evidence type="ECO:0000269" key="13">
    <source>
    </source>
</evidence>
<evidence type="ECO:0000269" key="14">
    <source>
    </source>
</evidence>
<evidence type="ECO:0000269" key="15">
    <source>
    </source>
</evidence>
<evidence type="ECO:0000269" key="16">
    <source>
    </source>
</evidence>
<evidence type="ECO:0000269" key="17">
    <source>
    </source>
</evidence>
<evidence type="ECO:0000269" key="18">
    <source>
    </source>
</evidence>
<evidence type="ECO:0000269" key="19">
    <source>
    </source>
</evidence>
<evidence type="ECO:0000269" key="20">
    <source>
    </source>
</evidence>
<evidence type="ECO:0000303" key="21">
    <source>
    </source>
</evidence>
<evidence type="ECO:0000305" key="22"/>
<evidence type="ECO:0000305" key="23">
    <source>
    </source>
</evidence>
<evidence type="ECO:0007744" key="24">
    <source>
    </source>
</evidence>
<evidence type="ECO:0007744" key="25">
    <source>
    </source>
</evidence>
<evidence type="ECO:0007744" key="26">
    <source>
    </source>
</evidence>
<accession>Q62073</accession>